<keyword id="KW-1015">Disulfide bond</keyword>
<keyword id="KW-0249">Electron transport</keyword>
<keyword id="KW-0560">Oxidoreductase</keyword>
<keyword id="KW-0676">Redox-active center</keyword>
<keyword id="KW-0813">Transport</keyword>
<dbReference type="EMBL" id="AL596167">
    <property type="protein sequence ID" value="CAC96427.1"/>
    <property type="molecule type" value="Genomic_DNA"/>
</dbReference>
<dbReference type="PIR" id="AC1582">
    <property type="entry name" value="AC1582"/>
</dbReference>
<dbReference type="RefSeq" id="WP_003723853.1">
    <property type="nucleotide sequence ID" value="NC_003212.1"/>
</dbReference>
<dbReference type="SMR" id="P0A4L4"/>
<dbReference type="STRING" id="272626.gene:17565526"/>
<dbReference type="GeneID" id="93234644"/>
<dbReference type="KEGG" id="lin:trxA"/>
<dbReference type="eggNOG" id="COG3118">
    <property type="taxonomic scope" value="Bacteria"/>
</dbReference>
<dbReference type="HOGENOM" id="CLU_090389_10_4_9"/>
<dbReference type="OrthoDB" id="9790390at2"/>
<dbReference type="Proteomes" id="UP000002513">
    <property type="component" value="Chromosome"/>
</dbReference>
<dbReference type="GO" id="GO:0005829">
    <property type="term" value="C:cytosol"/>
    <property type="evidence" value="ECO:0007669"/>
    <property type="project" value="TreeGrafter"/>
</dbReference>
<dbReference type="GO" id="GO:0015035">
    <property type="term" value="F:protein-disulfide reductase activity"/>
    <property type="evidence" value="ECO:0007669"/>
    <property type="project" value="InterPro"/>
</dbReference>
<dbReference type="GO" id="GO:0045454">
    <property type="term" value="P:cell redox homeostasis"/>
    <property type="evidence" value="ECO:0007669"/>
    <property type="project" value="TreeGrafter"/>
</dbReference>
<dbReference type="CDD" id="cd02947">
    <property type="entry name" value="TRX_family"/>
    <property type="match status" value="1"/>
</dbReference>
<dbReference type="FunFam" id="3.40.30.10:FF:000001">
    <property type="entry name" value="Thioredoxin"/>
    <property type="match status" value="1"/>
</dbReference>
<dbReference type="Gene3D" id="3.40.30.10">
    <property type="entry name" value="Glutaredoxin"/>
    <property type="match status" value="1"/>
</dbReference>
<dbReference type="InterPro" id="IPR005746">
    <property type="entry name" value="Thioredoxin"/>
</dbReference>
<dbReference type="InterPro" id="IPR036249">
    <property type="entry name" value="Thioredoxin-like_sf"/>
</dbReference>
<dbReference type="InterPro" id="IPR017937">
    <property type="entry name" value="Thioredoxin_CS"/>
</dbReference>
<dbReference type="InterPro" id="IPR013766">
    <property type="entry name" value="Thioredoxin_domain"/>
</dbReference>
<dbReference type="NCBIfam" id="TIGR01068">
    <property type="entry name" value="thioredoxin"/>
    <property type="match status" value="1"/>
</dbReference>
<dbReference type="PANTHER" id="PTHR45663">
    <property type="entry name" value="GEO12009P1"/>
    <property type="match status" value="1"/>
</dbReference>
<dbReference type="PANTHER" id="PTHR45663:SF11">
    <property type="entry name" value="GEO12009P1"/>
    <property type="match status" value="1"/>
</dbReference>
<dbReference type="Pfam" id="PF00085">
    <property type="entry name" value="Thioredoxin"/>
    <property type="match status" value="1"/>
</dbReference>
<dbReference type="PIRSF" id="PIRSF000077">
    <property type="entry name" value="Thioredoxin"/>
    <property type="match status" value="1"/>
</dbReference>
<dbReference type="PRINTS" id="PR00421">
    <property type="entry name" value="THIOREDOXIN"/>
</dbReference>
<dbReference type="SUPFAM" id="SSF52833">
    <property type="entry name" value="Thioredoxin-like"/>
    <property type="match status" value="1"/>
</dbReference>
<dbReference type="PROSITE" id="PS00194">
    <property type="entry name" value="THIOREDOXIN_1"/>
    <property type="match status" value="1"/>
</dbReference>
<dbReference type="PROSITE" id="PS51352">
    <property type="entry name" value="THIOREDOXIN_2"/>
    <property type="match status" value="1"/>
</dbReference>
<reference key="1">
    <citation type="journal article" date="2001" name="Science">
        <title>Comparative genomics of Listeria species.</title>
        <authorList>
            <person name="Glaser P."/>
            <person name="Frangeul L."/>
            <person name="Buchrieser C."/>
            <person name="Rusniok C."/>
            <person name="Amend A."/>
            <person name="Baquero F."/>
            <person name="Berche P."/>
            <person name="Bloecker H."/>
            <person name="Brandt P."/>
            <person name="Chakraborty T."/>
            <person name="Charbit A."/>
            <person name="Chetouani F."/>
            <person name="Couve E."/>
            <person name="de Daruvar A."/>
            <person name="Dehoux P."/>
            <person name="Domann E."/>
            <person name="Dominguez-Bernal G."/>
            <person name="Duchaud E."/>
            <person name="Durant L."/>
            <person name="Dussurget O."/>
            <person name="Entian K.-D."/>
            <person name="Fsihi H."/>
            <person name="Garcia-del Portillo F."/>
            <person name="Garrido P."/>
            <person name="Gautier L."/>
            <person name="Goebel W."/>
            <person name="Gomez-Lopez N."/>
            <person name="Hain T."/>
            <person name="Hauf J."/>
            <person name="Jackson D."/>
            <person name="Jones L.-M."/>
            <person name="Kaerst U."/>
            <person name="Kreft J."/>
            <person name="Kuhn M."/>
            <person name="Kunst F."/>
            <person name="Kurapkat G."/>
            <person name="Madueno E."/>
            <person name="Maitournam A."/>
            <person name="Mata Vicente J."/>
            <person name="Ng E."/>
            <person name="Nedjari H."/>
            <person name="Nordsiek G."/>
            <person name="Novella S."/>
            <person name="de Pablos B."/>
            <person name="Perez-Diaz J.-C."/>
            <person name="Purcell R."/>
            <person name="Remmel B."/>
            <person name="Rose M."/>
            <person name="Schlueter T."/>
            <person name="Simoes N."/>
            <person name="Tierrez A."/>
            <person name="Vazquez-Boland J.-A."/>
            <person name="Voss H."/>
            <person name="Wehland J."/>
            <person name="Cossart P."/>
        </authorList>
    </citation>
    <scope>NUCLEOTIDE SEQUENCE [LARGE SCALE GENOMIC DNA]</scope>
    <source>
        <strain>ATCC BAA-680 / CLIP 11262</strain>
    </source>
</reference>
<proteinExistence type="inferred from homology"/>
<sequence>MVKEITDATFEQETSEGLVLTDFWATWCGPCRMVAPVLEEIQEERGEALKIVKMDVDENPETPGSFGVMSIPTLLIKKDGEVVETIIGYRPKEELDEVINKYV</sequence>
<protein>
    <recommendedName>
        <fullName>Thioredoxin</fullName>
        <shortName>Trx</shortName>
    </recommendedName>
</protein>
<comment type="function">
    <text evidence="1">Component of the thioredoxin-thioredoxin reductase system. Participates in various redox reactions through the reversible oxidation of its active center dithiol to a disulfide and catalyzes dithiol-disulfide exchange reactions (By similarity).</text>
</comment>
<comment type="similarity">
    <text evidence="3">Belongs to the thioredoxin family.</text>
</comment>
<evidence type="ECO:0000250" key="1"/>
<evidence type="ECO:0000255" key="2">
    <source>
        <dbReference type="PROSITE-ProRule" id="PRU00691"/>
    </source>
</evidence>
<evidence type="ECO:0000305" key="3"/>
<organism>
    <name type="scientific">Listeria innocua serovar 6a (strain ATCC BAA-680 / CLIP 11262)</name>
    <dbReference type="NCBI Taxonomy" id="272626"/>
    <lineage>
        <taxon>Bacteria</taxon>
        <taxon>Bacillati</taxon>
        <taxon>Bacillota</taxon>
        <taxon>Bacilli</taxon>
        <taxon>Bacillales</taxon>
        <taxon>Listeriaceae</taxon>
        <taxon>Listeria</taxon>
    </lineage>
</organism>
<feature type="chain" id="PRO_0000120110" description="Thioredoxin">
    <location>
        <begin position="1"/>
        <end position="103"/>
    </location>
</feature>
<feature type="domain" description="Thioredoxin" evidence="2">
    <location>
        <begin position="1"/>
        <end position="103"/>
    </location>
</feature>
<feature type="disulfide bond" description="Redox-active" evidence="2">
    <location>
        <begin position="28"/>
        <end position="31"/>
    </location>
</feature>
<accession>P0A4L4</accession>
<accession>Q9S386</accession>
<gene>
    <name type="primary">trxA</name>
    <name type="ordered locus">lin1196</name>
</gene>
<name>THIO_LISIN</name>